<comment type="function">
    <text evidence="1">Component of the Mediator complex, a coactivator involved in the regulated transcription of nearly all RNA polymerase II-dependent genes. Mediator functions as a bridge to convey information from gene-specific regulatory proteins to the basal RNA polymerase II transcription machinery. Mediator is recruited to promoters by direct interactions with regulatory proteins and serves as a scaffold for the assembly of a functional preinitiation complex with RNA polymerase II and the general transcription factors (By similarity).</text>
</comment>
<comment type="subunit">
    <text evidence="1">Component of the Mediator complex.</text>
</comment>
<comment type="subcellular location">
    <subcellularLocation>
        <location evidence="5">Nucleus</location>
    </subcellularLocation>
</comment>
<comment type="similarity">
    <text evidence="5">Belongs to the Mediator complex subunit 26 family.</text>
</comment>
<sequence length="1602" mass="178182">MNQNQIQQLTSHLSQALDQNYDVVNMDAVLSVICALEGTTITKEQLEATRLAKYINQLRRRTKNEHLARRAKSLLKMWREMVGIQQTANDSQHHHSQPTSLPTPPSAHFYKYTAGSADSNLTETVVHLPVSPSVPSHRTISDLHSNIDSSEPPPAVLPSQHQSNFLNLINNISKCEREESNSSMLIQAHKQPQSQQFQNRPLGLPLPFISEQSLNSVSISSDVGNDKKGEASIVIDIVTDSDENDNESASTIQGKPTAAASAPFTISPAPCPRPKKFKKDKKHKERDRSKSSLLAQNELIGQHSSRYSAKVKEGQSQTAQATDSEIFSLSNSSMSSILSGDAALLNPQHKFRANASELTFTGRFKPVNHLDSANQDNSALPIGQNIVFRQNESERPIFEDSITNDSSTSCSRLSPPTVEERRKSDKIDDSIRQQIATSIQMPMPSIGLGHESNSRTEYLENSSKSQVPKKRGRKKGSKGVDAVIAKESSSLSQQIFFGVGSTVKKVKTTKELFSEIQSRKLITAVQSPTSNISNSSISRELTTRALMPRPTSSCSDTSIHSPQIMETYSGNVTLMGVDKFSNKNEDAGNTDSDTITSEPSQDSNKSQEIKECTSLDSNSNSLQTLSLAKKSMHTSKSENYSDVTTQLMHLIHSIKGPLSVYEVEKLYRAQIVPCTCLVIEEICNPFGEPINLSSDNGVGDPKSDSNNDNVSRHKKQEEQLPKLERLSDNDFSMDTPQKPVKSIFDLDFDEDEDPLQSIINDIRMPPTKLEETKENADLKNALAHLPMNISSLDVASVNADTVQNQINSHNQEGETSEEQNVAIPVFTCHEDPDCVAKQRFHVQTNKVNNFHINALHNFYIPNINGNWDSIDSSIVSESTITDFLNTLGSYTVTDGADVVPKYGSLTYDRIRKDLSSIKFTSSFKTRPLKSFMPPFLGVAKCLPTCRLARSSFKKKQIQSPPPPLIVIPSTIEGLDPDIMQKDYNGGSPLKVDVDVLVSGHDNNESNVQMQVNLQTKSDPTLSYNLLKLANDELPFEETEPNDKGSEYENQDNGRFSSSSNSSCSNSSNSSLKKTQDSINEKLRNQRSQRYRVQSVEEETNRKRRGKNRKKRNIKENPPIKRIKISLNGTISNLSSSNNSSSSESETETGLENENEVENDYENNNDEEYAVVQRPTCGDGASNNHIVMTIKKTPSKINSPANSMSATSPINASETRNVKNAFSDSNRPNLLTSSTSIAPLYQIDGGRRLLLSKKFSRRPHRRRRYRQCRRKSDLQRKAIDLELKHLFTYKTKPDLDIGSAIKLHKKLFFSHELCKQNTAGRKERILNYSSSSSSNYDDDESDLDGLSSEETAADLKENVNTFNKYNLNIETDNTSAERTVSEDPLKIEEDPYLTSSSNDVTDSDNESDNHEVFDEVAKRVEADEFNELHNNGMLTSFNSISVENQLINEPTLMAVSGSVDTPAPQSNASLASLQNENCDDVNNLCYNNNNLDVIKHSLAASPILNDINYKNVISNTSPRVLANKFSDCIPQNIGNSELSPPIPLPCAEYQTGIRPAPLTDLALSSYADFRCTRIQQFKEWHQVLQLQSYNNEPLIVLPYVVLE</sequence>
<protein>
    <recommendedName>
        <fullName>Mediator of RNA polymerase II transcription subunit 26</fullName>
    </recommendedName>
    <alternativeName>
        <fullName>Mediator complex subunit 26</fullName>
    </alternativeName>
</protein>
<reference key="1">
    <citation type="journal article" date="2005" name="Genome Res.">
        <title>Comparative genome sequencing of Drosophila pseudoobscura: chromosomal, gene, and cis-element evolution.</title>
        <authorList>
            <person name="Richards S."/>
            <person name="Liu Y."/>
            <person name="Bettencourt B.R."/>
            <person name="Hradecky P."/>
            <person name="Letovsky S."/>
            <person name="Nielsen R."/>
            <person name="Thornton K."/>
            <person name="Hubisz M.J."/>
            <person name="Chen R."/>
            <person name="Meisel R.P."/>
            <person name="Couronne O."/>
            <person name="Hua S."/>
            <person name="Smith M.A."/>
            <person name="Zhang P."/>
            <person name="Liu J."/>
            <person name="Bussemaker H.J."/>
            <person name="van Batenburg M.F."/>
            <person name="Howells S.L."/>
            <person name="Scherer S.E."/>
            <person name="Sodergren E."/>
            <person name="Matthews B.B."/>
            <person name="Crosby M.A."/>
            <person name="Schroeder A.J."/>
            <person name="Ortiz-Barrientos D."/>
            <person name="Rives C.M."/>
            <person name="Metzker M.L."/>
            <person name="Muzny D.M."/>
            <person name="Scott G."/>
            <person name="Steffen D."/>
            <person name="Wheeler D.A."/>
            <person name="Worley K.C."/>
            <person name="Havlak P."/>
            <person name="Durbin K.J."/>
            <person name="Egan A."/>
            <person name="Gill R."/>
            <person name="Hume J."/>
            <person name="Morgan M.B."/>
            <person name="Miner G."/>
            <person name="Hamilton C."/>
            <person name="Huang Y."/>
            <person name="Waldron L."/>
            <person name="Verduzco D."/>
            <person name="Clerc-Blankenburg K.P."/>
            <person name="Dubchak I."/>
            <person name="Noor M.A.F."/>
            <person name="Anderson W."/>
            <person name="White K.P."/>
            <person name="Clark A.G."/>
            <person name="Schaeffer S.W."/>
            <person name="Gelbart W.M."/>
            <person name="Weinstock G.M."/>
            <person name="Gibbs R.A."/>
        </authorList>
    </citation>
    <scope>NUCLEOTIDE SEQUENCE [LARGE SCALE GENOMIC DNA]</scope>
    <source>
        <strain>MV2-25 / Tucson 14011-0121.94</strain>
    </source>
</reference>
<organism>
    <name type="scientific">Drosophila pseudoobscura pseudoobscura</name>
    <name type="common">Fruit fly</name>
    <dbReference type="NCBI Taxonomy" id="46245"/>
    <lineage>
        <taxon>Eukaryota</taxon>
        <taxon>Metazoa</taxon>
        <taxon>Ecdysozoa</taxon>
        <taxon>Arthropoda</taxon>
        <taxon>Hexapoda</taxon>
        <taxon>Insecta</taxon>
        <taxon>Pterygota</taxon>
        <taxon>Neoptera</taxon>
        <taxon>Endopterygota</taxon>
        <taxon>Diptera</taxon>
        <taxon>Brachycera</taxon>
        <taxon>Muscomorpha</taxon>
        <taxon>Ephydroidea</taxon>
        <taxon>Drosophilidae</taxon>
        <taxon>Drosophila</taxon>
        <taxon>Sophophora</taxon>
    </lineage>
</organism>
<evidence type="ECO:0000250" key="1"/>
<evidence type="ECO:0000255" key="2"/>
<evidence type="ECO:0000255" key="3">
    <source>
        <dbReference type="PROSITE-ProRule" id="PRU00649"/>
    </source>
</evidence>
<evidence type="ECO:0000256" key="4">
    <source>
        <dbReference type="SAM" id="MobiDB-lite"/>
    </source>
</evidence>
<evidence type="ECO:0000305" key="5"/>
<gene>
    <name type="primary">MED26</name>
    <name type="ORF">GA14731</name>
</gene>
<name>MED26_DROPS</name>
<keyword id="KW-0010">Activator</keyword>
<keyword id="KW-0175">Coiled coil</keyword>
<keyword id="KW-0539">Nucleus</keyword>
<keyword id="KW-1185">Reference proteome</keyword>
<keyword id="KW-0804">Transcription</keyword>
<keyword id="KW-0805">Transcription regulation</keyword>
<dbReference type="EMBL" id="CH475401">
    <property type="protein sequence ID" value="EAL29261.2"/>
    <property type="molecule type" value="Genomic_DNA"/>
</dbReference>
<dbReference type="RefSeq" id="XP_001352375.2">
    <property type="nucleotide sequence ID" value="XM_001352339.3"/>
</dbReference>
<dbReference type="SMR" id="Q29CV2"/>
<dbReference type="FunCoup" id="Q29CV2">
    <property type="interactions" value="96"/>
</dbReference>
<dbReference type="STRING" id="46245.Q29CV2"/>
<dbReference type="EnsemblMetazoa" id="FBtr0273954">
    <property type="protein sequence ID" value="FBpp0272392"/>
    <property type="gene ID" value="FBgn0074758"/>
</dbReference>
<dbReference type="GeneID" id="4811809"/>
<dbReference type="KEGG" id="dpo:4811809"/>
<dbReference type="CTD" id="9441"/>
<dbReference type="eggNOG" id="ENOG502S9CY">
    <property type="taxonomic scope" value="Eukaryota"/>
</dbReference>
<dbReference type="HOGENOM" id="CLU_249548_0_0_1"/>
<dbReference type="InParanoid" id="Q29CV2"/>
<dbReference type="OMA" id="NALHNFY"/>
<dbReference type="ChiTaRS" id="MED26">
    <property type="organism name" value="fly"/>
</dbReference>
<dbReference type="Proteomes" id="UP000001819">
    <property type="component" value="Chromosome 5"/>
</dbReference>
<dbReference type="Bgee" id="FBgn0074758">
    <property type="expression patterns" value="Expressed in insect adult head and 2 other cell types or tissues"/>
</dbReference>
<dbReference type="ExpressionAtlas" id="Q29CV2">
    <property type="expression patterns" value="baseline"/>
</dbReference>
<dbReference type="GO" id="GO:0070847">
    <property type="term" value="C:core mediator complex"/>
    <property type="evidence" value="ECO:0007669"/>
    <property type="project" value="TreeGrafter"/>
</dbReference>
<dbReference type="GO" id="GO:0016592">
    <property type="term" value="C:mediator complex"/>
    <property type="evidence" value="ECO:0000250"/>
    <property type="project" value="UniProtKB"/>
</dbReference>
<dbReference type="GO" id="GO:0003712">
    <property type="term" value="F:transcription coregulator activity"/>
    <property type="evidence" value="ECO:0000250"/>
    <property type="project" value="UniProtKB"/>
</dbReference>
<dbReference type="GO" id="GO:0010628">
    <property type="term" value="P:positive regulation of gene expression"/>
    <property type="evidence" value="ECO:0007669"/>
    <property type="project" value="TreeGrafter"/>
</dbReference>
<dbReference type="GO" id="GO:0006357">
    <property type="term" value="P:regulation of transcription by RNA polymerase II"/>
    <property type="evidence" value="ECO:0000250"/>
    <property type="project" value="UniProtKB"/>
</dbReference>
<dbReference type="Gene3D" id="1.20.930.10">
    <property type="entry name" value="Conserved domain common to transcription factors TFIIS, elongin A, CRSP70"/>
    <property type="match status" value="1"/>
</dbReference>
<dbReference type="InterPro" id="IPR042376">
    <property type="entry name" value="MED26"/>
</dbReference>
<dbReference type="InterPro" id="IPR003617">
    <property type="entry name" value="TFIIS/CRSP70_N_sub"/>
</dbReference>
<dbReference type="InterPro" id="IPR035441">
    <property type="entry name" value="TFIIS/LEDGF_dom_sf"/>
</dbReference>
<dbReference type="InterPro" id="IPR017923">
    <property type="entry name" value="TFIIS_N"/>
</dbReference>
<dbReference type="PANTHER" id="PTHR15201">
    <property type="entry name" value="CRSP70"/>
    <property type="match status" value="1"/>
</dbReference>
<dbReference type="PANTHER" id="PTHR15201:SF1">
    <property type="entry name" value="MEDIATOR OF RNA POLYMERASE II TRANSCRIPTION SUBUNIT 26"/>
    <property type="match status" value="1"/>
</dbReference>
<dbReference type="Pfam" id="PF08711">
    <property type="entry name" value="Med26"/>
    <property type="match status" value="1"/>
</dbReference>
<dbReference type="SMART" id="SM00509">
    <property type="entry name" value="TFS2N"/>
    <property type="match status" value="1"/>
</dbReference>
<dbReference type="SUPFAM" id="SSF47676">
    <property type="entry name" value="Conserved domain common to transcription factors TFIIS, elongin A, CRSP70"/>
    <property type="match status" value="1"/>
</dbReference>
<dbReference type="PROSITE" id="PS51319">
    <property type="entry name" value="TFIIS_N"/>
    <property type="match status" value="1"/>
</dbReference>
<feature type="chain" id="PRO_0000304963" description="Mediator of RNA polymerase II transcription subunit 26">
    <location>
        <begin position="1"/>
        <end position="1602"/>
    </location>
</feature>
<feature type="domain" description="TFIIS N-terminal" evidence="3">
    <location>
        <begin position="8"/>
        <end position="85"/>
    </location>
</feature>
<feature type="region of interest" description="Disordered" evidence="4">
    <location>
        <begin position="86"/>
        <end position="108"/>
    </location>
</feature>
<feature type="region of interest" description="Disordered" evidence="4">
    <location>
        <begin position="238"/>
        <end position="298"/>
    </location>
</feature>
<feature type="region of interest" description="Disordered" evidence="4">
    <location>
        <begin position="399"/>
        <end position="481"/>
    </location>
</feature>
<feature type="region of interest" description="Disordered" evidence="4">
    <location>
        <begin position="580"/>
        <end position="617"/>
    </location>
</feature>
<feature type="region of interest" description="Disordered" evidence="4">
    <location>
        <begin position="694"/>
        <end position="736"/>
    </location>
</feature>
<feature type="region of interest" description="Disordered" evidence="4">
    <location>
        <begin position="1035"/>
        <end position="1158"/>
    </location>
</feature>
<feature type="region of interest" description="Disordered" evidence="4">
    <location>
        <begin position="1372"/>
        <end position="1407"/>
    </location>
</feature>
<feature type="coiled-coil region" evidence="2">
    <location>
        <begin position="792"/>
        <end position="820"/>
    </location>
</feature>
<feature type="compositionally biased region" description="Basic residues" evidence="4">
    <location>
        <begin position="273"/>
        <end position="285"/>
    </location>
</feature>
<feature type="compositionally biased region" description="Polar residues" evidence="4">
    <location>
        <begin position="401"/>
        <end position="414"/>
    </location>
</feature>
<feature type="compositionally biased region" description="Basic and acidic residues" evidence="4">
    <location>
        <begin position="418"/>
        <end position="431"/>
    </location>
</feature>
<feature type="compositionally biased region" description="Basic residues" evidence="4">
    <location>
        <begin position="467"/>
        <end position="477"/>
    </location>
</feature>
<feature type="compositionally biased region" description="Polar residues" evidence="4">
    <location>
        <begin position="587"/>
        <end position="604"/>
    </location>
</feature>
<feature type="compositionally biased region" description="Basic and acidic residues" evidence="4">
    <location>
        <begin position="715"/>
        <end position="728"/>
    </location>
</feature>
<feature type="compositionally biased region" description="Low complexity" evidence="4">
    <location>
        <begin position="1056"/>
        <end position="1070"/>
    </location>
</feature>
<feature type="compositionally biased region" description="Basic and acidic residues" evidence="4">
    <location>
        <begin position="1073"/>
        <end position="1083"/>
    </location>
</feature>
<feature type="compositionally biased region" description="Basic residues" evidence="4">
    <location>
        <begin position="1101"/>
        <end position="1112"/>
    </location>
</feature>
<feature type="compositionally biased region" description="Low complexity" evidence="4">
    <location>
        <begin position="1124"/>
        <end position="1143"/>
    </location>
</feature>
<feature type="compositionally biased region" description="Acidic residues" evidence="4">
    <location>
        <begin position="1144"/>
        <end position="1158"/>
    </location>
</feature>
<feature type="compositionally biased region" description="Basic and acidic residues" evidence="4">
    <location>
        <begin position="1378"/>
        <end position="1388"/>
    </location>
</feature>
<accession>Q29CV2</accession>
<proteinExistence type="inferred from homology"/>